<proteinExistence type="inferred from homology"/>
<protein>
    <recommendedName>
        <fullName evidence="1">Sulfite reductase [NADPH] hemoprotein beta-component</fullName>
        <shortName evidence="1">SiR-HP</shortName>
        <shortName evidence="1">SiRHP</shortName>
        <ecNumber evidence="1">1.8.1.2</ecNumber>
    </recommendedName>
</protein>
<name>CYSI_ACTP7</name>
<keyword id="KW-0004">4Fe-4S</keyword>
<keyword id="KW-0028">Amino-acid biosynthesis</keyword>
<keyword id="KW-0198">Cysteine biosynthesis</keyword>
<keyword id="KW-0349">Heme</keyword>
<keyword id="KW-0408">Iron</keyword>
<keyword id="KW-0411">Iron-sulfur</keyword>
<keyword id="KW-0479">Metal-binding</keyword>
<keyword id="KW-0521">NADP</keyword>
<keyword id="KW-0560">Oxidoreductase</keyword>
<sequence length="588" mass="66663">MSDKKTKGLEWQEKPLSDNERLKTDSNFLRGTILDDLKDGLTGGFKGDNFQLIRFHGMYEQDDRDIRAERLEEKLEPLKFMLLRCRLPGGIIKPYQWIEIDKFAREHTRYQSIRLTNRQTFQYHGVPKGKLQPMHRLLHSIGLDSIATAADMNRNVLCTSNPIESELHQQAYEFAKKISEHLLPRSRGYLDVWVDGKKVESSDDLLKIEDEPILGKTYLPRKFKTAVAIPPLNDVDVYANDLNFIAIQDENGQLCGFNVLVGGGLSFEHGNTKTYPNVAYSLGFVPLEHTLAAAEGVVKTQRDFGNRSDRKNARVRYTIQNMTLDGFRAEVERCMNIKFEPTRPYEFTERGDRIGWVKGIDNNWHLTLFIESGRITDKPEKPLMTGVLELAKVHKGDFRITANQNLIVANVAEQDKAQIEAIARQYGLIQEISKLRENAMSCVSLPTCPLAMAEAERVLPDFISELDKVLSKHNVADESIITRITGCPNGCGRAMLAEIGLVGKAIGRYNLHIGGDRAGLRISRLYKENITLQEIVNEIDQLVARWATERQTNEAFGDFVIRSNIIAPVVNAHIDFWDATKIIPTTII</sequence>
<dbReference type="EC" id="1.8.1.2" evidence="1"/>
<dbReference type="EMBL" id="CP001091">
    <property type="protein sequence ID" value="ACE62581.1"/>
    <property type="molecule type" value="Genomic_DNA"/>
</dbReference>
<dbReference type="RefSeq" id="WP_005618307.1">
    <property type="nucleotide sequence ID" value="NC_010939.1"/>
</dbReference>
<dbReference type="SMR" id="B3GZ95"/>
<dbReference type="KEGG" id="apa:APP7_1929"/>
<dbReference type="HOGENOM" id="CLU_001975_3_2_6"/>
<dbReference type="UniPathway" id="UPA00140">
    <property type="reaction ID" value="UER00207"/>
</dbReference>
<dbReference type="Proteomes" id="UP000001226">
    <property type="component" value="Chromosome"/>
</dbReference>
<dbReference type="GO" id="GO:0009337">
    <property type="term" value="C:sulfite reductase complex (NADPH)"/>
    <property type="evidence" value="ECO:0007669"/>
    <property type="project" value="InterPro"/>
</dbReference>
<dbReference type="GO" id="GO:0051539">
    <property type="term" value="F:4 iron, 4 sulfur cluster binding"/>
    <property type="evidence" value="ECO:0007669"/>
    <property type="project" value="UniProtKB-KW"/>
</dbReference>
<dbReference type="GO" id="GO:0020037">
    <property type="term" value="F:heme binding"/>
    <property type="evidence" value="ECO:0007669"/>
    <property type="project" value="InterPro"/>
</dbReference>
<dbReference type="GO" id="GO:0046872">
    <property type="term" value="F:metal ion binding"/>
    <property type="evidence" value="ECO:0007669"/>
    <property type="project" value="UniProtKB-KW"/>
</dbReference>
<dbReference type="GO" id="GO:0050661">
    <property type="term" value="F:NADP binding"/>
    <property type="evidence" value="ECO:0007669"/>
    <property type="project" value="InterPro"/>
</dbReference>
<dbReference type="GO" id="GO:0050311">
    <property type="term" value="F:sulfite reductase (ferredoxin) activity"/>
    <property type="evidence" value="ECO:0007669"/>
    <property type="project" value="TreeGrafter"/>
</dbReference>
<dbReference type="GO" id="GO:0004783">
    <property type="term" value="F:sulfite reductase (NADPH) activity"/>
    <property type="evidence" value="ECO:0007669"/>
    <property type="project" value="UniProtKB-UniRule"/>
</dbReference>
<dbReference type="GO" id="GO:0019344">
    <property type="term" value="P:cysteine biosynthetic process"/>
    <property type="evidence" value="ECO:0007669"/>
    <property type="project" value="UniProtKB-KW"/>
</dbReference>
<dbReference type="GO" id="GO:0070814">
    <property type="term" value="P:hydrogen sulfide biosynthetic process"/>
    <property type="evidence" value="ECO:0007669"/>
    <property type="project" value="UniProtKB-UniRule"/>
</dbReference>
<dbReference type="GO" id="GO:0000103">
    <property type="term" value="P:sulfate assimilation"/>
    <property type="evidence" value="ECO:0007669"/>
    <property type="project" value="UniProtKB-UniRule"/>
</dbReference>
<dbReference type="FunFam" id="3.30.413.10:FF:000003">
    <property type="entry name" value="Sulfite reductase [NADPH] hemoprotein beta-component"/>
    <property type="match status" value="1"/>
</dbReference>
<dbReference type="FunFam" id="3.30.413.10:FF:000004">
    <property type="entry name" value="Sulfite reductase [NADPH] hemoprotein beta-component"/>
    <property type="match status" value="1"/>
</dbReference>
<dbReference type="Gene3D" id="3.90.480.20">
    <property type="match status" value="1"/>
</dbReference>
<dbReference type="Gene3D" id="3.30.413.10">
    <property type="entry name" value="Sulfite Reductase Hemoprotein, domain 1"/>
    <property type="match status" value="2"/>
</dbReference>
<dbReference type="HAMAP" id="MF_01540">
    <property type="entry name" value="CysI"/>
    <property type="match status" value="1"/>
</dbReference>
<dbReference type="InterPro" id="IPR011786">
    <property type="entry name" value="CysI"/>
</dbReference>
<dbReference type="InterPro" id="IPR005117">
    <property type="entry name" value="NiRdtase/SiRdtase_haem-b_fer"/>
</dbReference>
<dbReference type="InterPro" id="IPR036136">
    <property type="entry name" value="Nit/Sulf_reduc_fer-like_dom_sf"/>
</dbReference>
<dbReference type="InterPro" id="IPR006067">
    <property type="entry name" value="NO2/SO3_Rdtase_4Fe4S_dom"/>
</dbReference>
<dbReference type="InterPro" id="IPR045169">
    <property type="entry name" value="NO2/SO3_Rdtase_4Fe4S_prot"/>
</dbReference>
<dbReference type="InterPro" id="IPR045854">
    <property type="entry name" value="NO2/SO3_Rdtase_4Fe4S_sf"/>
</dbReference>
<dbReference type="InterPro" id="IPR006066">
    <property type="entry name" value="NO2/SO3_Rdtase_FeS/sirohaem_BS"/>
</dbReference>
<dbReference type="NCBIfam" id="TIGR02041">
    <property type="entry name" value="CysI"/>
    <property type="match status" value="1"/>
</dbReference>
<dbReference type="NCBIfam" id="NF010029">
    <property type="entry name" value="PRK13504.1"/>
    <property type="match status" value="1"/>
</dbReference>
<dbReference type="PANTHER" id="PTHR11493:SF47">
    <property type="entry name" value="SULFITE REDUCTASE [NADPH] SUBUNIT BETA"/>
    <property type="match status" value="1"/>
</dbReference>
<dbReference type="PANTHER" id="PTHR11493">
    <property type="entry name" value="SULFITE REDUCTASE [NADPH] SUBUNIT BETA-RELATED"/>
    <property type="match status" value="1"/>
</dbReference>
<dbReference type="Pfam" id="PF01077">
    <property type="entry name" value="NIR_SIR"/>
    <property type="match status" value="1"/>
</dbReference>
<dbReference type="Pfam" id="PF03460">
    <property type="entry name" value="NIR_SIR_ferr"/>
    <property type="match status" value="2"/>
</dbReference>
<dbReference type="PRINTS" id="PR00397">
    <property type="entry name" value="SIROHAEM"/>
</dbReference>
<dbReference type="SUPFAM" id="SSF56014">
    <property type="entry name" value="Nitrite and sulphite reductase 4Fe-4S domain-like"/>
    <property type="match status" value="2"/>
</dbReference>
<dbReference type="SUPFAM" id="SSF55124">
    <property type="entry name" value="Nitrite/Sulfite reductase N-terminal domain-like"/>
    <property type="match status" value="2"/>
</dbReference>
<dbReference type="PROSITE" id="PS00365">
    <property type="entry name" value="NIR_SIR"/>
    <property type="match status" value="1"/>
</dbReference>
<evidence type="ECO:0000255" key="1">
    <source>
        <dbReference type="HAMAP-Rule" id="MF_01540"/>
    </source>
</evidence>
<accession>B3GZ95</accession>
<gene>
    <name evidence="1" type="primary">cysI</name>
    <name type="ordered locus">APP7_1929</name>
</gene>
<reference key="1">
    <citation type="submission" date="2008-06" db="EMBL/GenBank/DDBJ databases">
        <title>Genome and proteome analysis of A. pleuropneumoniae serotype 7.</title>
        <authorList>
            <person name="Linke B."/>
            <person name="Buettner F."/>
            <person name="Martinez-Arias R."/>
            <person name="Goesmann A."/>
            <person name="Baltes N."/>
            <person name="Tegetmeyer H."/>
            <person name="Singh M."/>
            <person name="Gerlach G.F."/>
        </authorList>
    </citation>
    <scope>NUCLEOTIDE SEQUENCE [LARGE SCALE GENOMIC DNA]</scope>
    <source>
        <strain>AP76</strain>
    </source>
</reference>
<comment type="function">
    <text evidence="1">Component of the sulfite reductase complex that catalyzes the 6-electron reduction of sulfite to sulfide. This is one of several activities required for the biosynthesis of L-cysteine from sulfate.</text>
</comment>
<comment type="catalytic activity">
    <reaction evidence="1">
        <text>hydrogen sulfide + 3 NADP(+) + 3 H2O = sulfite + 3 NADPH + 4 H(+)</text>
        <dbReference type="Rhea" id="RHEA:13801"/>
        <dbReference type="ChEBI" id="CHEBI:15377"/>
        <dbReference type="ChEBI" id="CHEBI:15378"/>
        <dbReference type="ChEBI" id="CHEBI:17359"/>
        <dbReference type="ChEBI" id="CHEBI:29919"/>
        <dbReference type="ChEBI" id="CHEBI:57783"/>
        <dbReference type="ChEBI" id="CHEBI:58349"/>
        <dbReference type="EC" id="1.8.1.2"/>
    </reaction>
</comment>
<comment type="cofactor">
    <cofactor evidence="1">
        <name>siroheme</name>
        <dbReference type="ChEBI" id="CHEBI:60052"/>
    </cofactor>
    <text evidence="1">Binds 1 siroheme per subunit.</text>
</comment>
<comment type="cofactor">
    <cofactor evidence="1">
        <name>[4Fe-4S] cluster</name>
        <dbReference type="ChEBI" id="CHEBI:49883"/>
    </cofactor>
    <text evidence="1">Binds 1 [4Fe-4S] cluster per subunit.</text>
</comment>
<comment type="pathway">
    <text evidence="1">Sulfur metabolism; hydrogen sulfide biosynthesis; hydrogen sulfide from sulfite (NADPH route): step 1/1.</text>
</comment>
<comment type="subunit">
    <text evidence="1">Alpha(8)-beta(8). The alpha component is a flavoprotein, the beta component is a hemoprotein.</text>
</comment>
<comment type="similarity">
    <text evidence="1">Belongs to the nitrite and sulfite reductase 4Fe-4S domain family.</text>
</comment>
<feature type="chain" id="PRO_1000146639" description="Sulfite reductase [NADPH] hemoprotein beta-component">
    <location>
        <begin position="1"/>
        <end position="588"/>
    </location>
</feature>
<feature type="binding site" evidence="1">
    <location>
        <position position="442"/>
    </location>
    <ligand>
        <name>[4Fe-4S] cluster</name>
        <dbReference type="ChEBI" id="CHEBI:49883"/>
    </ligand>
</feature>
<feature type="binding site" evidence="1">
    <location>
        <position position="448"/>
    </location>
    <ligand>
        <name>[4Fe-4S] cluster</name>
        <dbReference type="ChEBI" id="CHEBI:49883"/>
    </ligand>
</feature>
<feature type="binding site" evidence="1">
    <location>
        <position position="487"/>
    </location>
    <ligand>
        <name>[4Fe-4S] cluster</name>
        <dbReference type="ChEBI" id="CHEBI:49883"/>
    </ligand>
</feature>
<feature type="binding site" evidence="1">
    <location>
        <position position="491"/>
    </location>
    <ligand>
        <name>[4Fe-4S] cluster</name>
        <dbReference type="ChEBI" id="CHEBI:49883"/>
    </ligand>
</feature>
<feature type="binding site" description="axial binding residue" evidence="1">
    <location>
        <position position="491"/>
    </location>
    <ligand>
        <name>siroheme</name>
        <dbReference type="ChEBI" id="CHEBI:60052"/>
    </ligand>
    <ligandPart>
        <name>Fe</name>
        <dbReference type="ChEBI" id="CHEBI:18248"/>
    </ligandPart>
</feature>
<organism>
    <name type="scientific">Actinobacillus pleuropneumoniae serotype 7 (strain AP76)</name>
    <dbReference type="NCBI Taxonomy" id="537457"/>
    <lineage>
        <taxon>Bacteria</taxon>
        <taxon>Pseudomonadati</taxon>
        <taxon>Pseudomonadota</taxon>
        <taxon>Gammaproteobacteria</taxon>
        <taxon>Pasteurellales</taxon>
        <taxon>Pasteurellaceae</taxon>
        <taxon>Actinobacillus</taxon>
    </lineage>
</organism>